<sequence>MQLHELMDPDYSDNPFPLYRKLHQQGPLIPAGDKIIISGSHAVVDALLNDRRVGKNYMESVRVRFGDDAAGLPLFQGISRMFLVLNPPDHNRL</sequence>
<accession>P42518</accession>
<dbReference type="EMBL" id="M95628">
    <property type="protein sequence ID" value="AAA73361.1"/>
    <property type="molecule type" value="Genomic_DNA"/>
</dbReference>
<dbReference type="SMR" id="P42518"/>
<dbReference type="eggNOG" id="COG2124">
    <property type="taxonomic scope" value="Bacteria"/>
</dbReference>
<dbReference type="GO" id="GO:0020037">
    <property type="term" value="F:heme binding"/>
    <property type="evidence" value="ECO:0007669"/>
    <property type="project" value="InterPro"/>
</dbReference>
<dbReference type="GO" id="GO:0005506">
    <property type="term" value="F:iron ion binding"/>
    <property type="evidence" value="ECO:0007669"/>
    <property type="project" value="InterPro"/>
</dbReference>
<dbReference type="GO" id="GO:0004497">
    <property type="term" value="F:monooxygenase activity"/>
    <property type="evidence" value="ECO:0007669"/>
    <property type="project" value="InterPro"/>
</dbReference>
<dbReference type="GO" id="GO:0016705">
    <property type="term" value="F:oxidoreductase activity, acting on paired donors, with incorporation or reduction of molecular oxygen"/>
    <property type="evidence" value="ECO:0007669"/>
    <property type="project" value="InterPro"/>
</dbReference>
<dbReference type="Gene3D" id="1.10.630.10">
    <property type="entry name" value="Cytochrome P450"/>
    <property type="match status" value="1"/>
</dbReference>
<dbReference type="InterPro" id="IPR036396">
    <property type="entry name" value="Cyt_P450_sf"/>
</dbReference>
<reference key="1">
    <citation type="journal article" date="1993" name="J. Bacteriol.">
        <title>The aroQ-encoded monofunctional chorismate mutase (CM-F) protein is a periplasmic enzyme in Erwinia herbicola.</title>
        <authorList>
            <person name="Xia T."/>
            <person name="Song J."/>
            <person name="Zhao G."/>
            <person name="Aldrich H."/>
            <person name="Jensen R.A."/>
        </authorList>
    </citation>
    <scope>NUCLEOTIDE SEQUENCE [GENOMIC DNA]</scope>
    <source>
        <strain>ATCC 33243 / DSM 4609 / NCPPB 2971</strain>
    </source>
</reference>
<feature type="chain" id="PRO_0000066125" description="Uncharacterized protein in aroQ 3'region">
    <location>
        <begin position="1"/>
        <end position="93" status="greater than"/>
    </location>
</feature>
<feature type="non-terminal residue">
    <location>
        <position position="93"/>
    </location>
</feature>
<protein>
    <recommendedName>
        <fullName>Uncharacterized protein in aroQ 3'region</fullName>
    </recommendedName>
</protein>
<proteinExistence type="predicted"/>
<organism>
    <name type="scientific">Enterobacter agglomerans</name>
    <name type="common">Erwinia herbicola</name>
    <name type="synonym">Pantoea agglomerans</name>
    <dbReference type="NCBI Taxonomy" id="549"/>
    <lineage>
        <taxon>Bacteria</taxon>
        <taxon>Pseudomonadati</taxon>
        <taxon>Pseudomonadota</taxon>
        <taxon>Gammaproteobacteria</taxon>
        <taxon>Enterobacterales</taxon>
        <taxon>Erwiniaceae</taxon>
        <taxon>Pantoea</taxon>
        <taxon>Pantoea agglomerans group</taxon>
    </lineage>
</organism>
<name>YARQ_ENTAG</name>